<reference key="1">
    <citation type="submission" date="2009-01" db="EMBL/GenBank/DDBJ databases">
        <title>Complete sequence of chromosome of Methylobacterium nodulans ORS 2060.</title>
        <authorList>
            <consortium name="US DOE Joint Genome Institute"/>
            <person name="Lucas S."/>
            <person name="Copeland A."/>
            <person name="Lapidus A."/>
            <person name="Glavina del Rio T."/>
            <person name="Dalin E."/>
            <person name="Tice H."/>
            <person name="Bruce D."/>
            <person name="Goodwin L."/>
            <person name="Pitluck S."/>
            <person name="Sims D."/>
            <person name="Brettin T."/>
            <person name="Detter J.C."/>
            <person name="Han C."/>
            <person name="Larimer F."/>
            <person name="Land M."/>
            <person name="Hauser L."/>
            <person name="Kyrpides N."/>
            <person name="Ivanova N."/>
            <person name="Marx C.J."/>
            <person name="Richardson P."/>
        </authorList>
    </citation>
    <scope>NUCLEOTIDE SEQUENCE [LARGE SCALE GENOMIC DNA]</scope>
    <source>
        <strain>LMG 21967 / CNCM I-2342 / ORS 2060</strain>
    </source>
</reference>
<comment type="function">
    <text evidence="1">Binds directly to 23S rRNA. The L1 stalk is quite mobile in the ribosome, and is involved in E site tRNA release.</text>
</comment>
<comment type="function">
    <text evidence="1">Protein L1 is also a translational repressor protein, it controls the translation of the L11 operon by binding to its mRNA.</text>
</comment>
<comment type="subunit">
    <text evidence="1">Part of the 50S ribosomal subunit.</text>
</comment>
<comment type="similarity">
    <text evidence="1">Belongs to the universal ribosomal protein uL1 family.</text>
</comment>
<dbReference type="EMBL" id="CP001349">
    <property type="protein sequence ID" value="ACL56885.1"/>
    <property type="molecule type" value="Genomic_DNA"/>
</dbReference>
<dbReference type="RefSeq" id="WP_015928576.1">
    <property type="nucleotide sequence ID" value="NC_011894.1"/>
</dbReference>
<dbReference type="SMR" id="B8IS73"/>
<dbReference type="STRING" id="460265.Mnod_1896"/>
<dbReference type="KEGG" id="mno:Mnod_1896"/>
<dbReference type="eggNOG" id="COG0081">
    <property type="taxonomic scope" value="Bacteria"/>
</dbReference>
<dbReference type="HOGENOM" id="CLU_062853_0_0_5"/>
<dbReference type="OrthoDB" id="9803740at2"/>
<dbReference type="Proteomes" id="UP000008207">
    <property type="component" value="Chromosome"/>
</dbReference>
<dbReference type="GO" id="GO:0022625">
    <property type="term" value="C:cytosolic large ribosomal subunit"/>
    <property type="evidence" value="ECO:0007669"/>
    <property type="project" value="TreeGrafter"/>
</dbReference>
<dbReference type="GO" id="GO:0019843">
    <property type="term" value="F:rRNA binding"/>
    <property type="evidence" value="ECO:0007669"/>
    <property type="project" value="UniProtKB-UniRule"/>
</dbReference>
<dbReference type="GO" id="GO:0003735">
    <property type="term" value="F:structural constituent of ribosome"/>
    <property type="evidence" value="ECO:0007669"/>
    <property type="project" value="InterPro"/>
</dbReference>
<dbReference type="GO" id="GO:0000049">
    <property type="term" value="F:tRNA binding"/>
    <property type="evidence" value="ECO:0007669"/>
    <property type="project" value="UniProtKB-KW"/>
</dbReference>
<dbReference type="GO" id="GO:0006417">
    <property type="term" value="P:regulation of translation"/>
    <property type="evidence" value="ECO:0007669"/>
    <property type="project" value="UniProtKB-KW"/>
</dbReference>
<dbReference type="GO" id="GO:0006412">
    <property type="term" value="P:translation"/>
    <property type="evidence" value="ECO:0007669"/>
    <property type="project" value="UniProtKB-UniRule"/>
</dbReference>
<dbReference type="CDD" id="cd00403">
    <property type="entry name" value="Ribosomal_L1"/>
    <property type="match status" value="1"/>
</dbReference>
<dbReference type="FunFam" id="3.40.50.790:FF:000001">
    <property type="entry name" value="50S ribosomal protein L1"/>
    <property type="match status" value="1"/>
</dbReference>
<dbReference type="Gene3D" id="3.30.190.20">
    <property type="match status" value="1"/>
</dbReference>
<dbReference type="Gene3D" id="3.40.50.790">
    <property type="match status" value="1"/>
</dbReference>
<dbReference type="HAMAP" id="MF_01318_B">
    <property type="entry name" value="Ribosomal_uL1_B"/>
    <property type="match status" value="1"/>
</dbReference>
<dbReference type="InterPro" id="IPR005878">
    <property type="entry name" value="Ribosom_uL1_bac-type"/>
</dbReference>
<dbReference type="InterPro" id="IPR002143">
    <property type="entry name" value="Ribosomal_uL1"/>
</dbReference>
<dbReference type="InterPro" id="IPR023674">
    <property type="entry name" value="Ribosomal_uL1-like"/>
</dbReference>
<dbReference type="InterPro" id="IPR028364">
    <property type="entry name" value="Ribosomal_uL1/biogenesis"/>
</dbReference>
<dbReference type="InterPro" id="IPR016095">
    <property type="entry name" value="Ribosomal_uL1_3-a/b-sand"/>
</dbReference>
<dbReference type="InterPro" id="IPR023673">
    <property type="entry name" value="Ribosomal_uL1_CS"/>
</dbReference>
<dbReference type="NCBIfam" id="TIGR01169">
    <property type="entry name" value="rplA_bact"/>
    <property type="match status" value="1"/>
</dbReference>
<dbReference type="PANTHER" id="PTHR36427">
    <property type="entry name" value="54S RIBOSOMAL PROTEIN L1, MITOCHONDRIAL"/>
    <property type="match status" value="1"/>
</dbReference>
<dbReference type="PANTHER" id="PTHR36427:SF3">
    <property type="entry name" value="LARGE RIBOSOMAL SUBUNIT PROTEIN UL1M"/>
    <property type="match status" value="1"/>
</dbReference>
<dbReference type="Pfam" id="PF00687">
    <property type="entry name" value="Ribosomal_L1"/>
    <property type="match status" value="1"/>
</dbReference>
<dbReference type="PIRSF" id="PIRSF002155">
    <property type="entry name" value="Ribosomal_L1"/>
    <property type="match status" value="1"/>
</dbReference>
<dbReference type="SUPFAM" id="SSF56808">
    <property type="entry name" value="Ribosomal protein L1"/>
    <property type="match status" value="1"/>
</dbReference>
<dbReference type="PROSITE" id="PS01199">
    <property type="entry name" value="RIBOSOMAL_L1"/>
    <property type="match status" value="1"/>
</dbReference>
<organism>
    <name type="scientific">Methylobacterium nodulans (strain LMG 21967 / CNCM I-2342 / ORS 2060)</name>
    <dbReference type="NCBI Taxonomy" id="460265"/>
    <lineage>
        <taxon>Bacteria</taxon>
        <taxon>Pseudomonadati</taxon>
        <taxon>Pseudomonadota</taxon>
        <taxon>Alphaproteobacteria</taxon>
        <taxon>Hyphomicrobiales</taxon>
        <taxon>Methylobacteriaceae</taxon>
        <taxon>Methylobacterium</taxon>
    </lineage>
</organism>
<name>RL1_METNO</name>
<feature type="chain" id="PRO_1000165689" description="Large ribosomal subunit protein uL1">
    <location>
        <begin position="1"/>
        <end position="235"/>
    </location>
</feature>
<sequence>MAREGKRIRAAREGIDPTKVYSLADAVKLIKERAKAKFDETFEISMNLGVDPRHADQMVRGVCNLPNGSGRTVRVAVFARGAKADEAKAAGADIVGAEDLLETIQGGTINFDRCIATPDMMPLVGRLGKVLGPRGLMPNPKVGTVTMDVKGAVGAAKGGAVEFRVEKAGIVHAGIGKVSFDDQKIVENARAFADAVARAKPSGAKGTYIQRIAVSSTMGPGIKVDPASVLAAATA</sequence>
<protein>
    <recommendedName>
        <fullName evidence="1">Large ribosomal subunit protein uL1</fullName>
    </recommendedName>
    <alternativeName>
        <fullName evidence="2">50S ribosomal protein L1</fullName>
    </alternativeName>
</protein>
<keyword id="KW-1185">Reference proteome</keyword>
<keyword id="KW-0678">Repressor</keyword>
<keyword id="KW-0687">Ribonucleoprotein</keyword>
<keyword id="KW-0689">Ribosomal protein</keyword>
<keyword id="KW-0694">RNA-binding</keyword>
<keyword id="KW-0699">rRNA-binding</keyword>
<keyword id="KW-0810">Translation regulation</keyword>
<keyword id="KW-0820">tRNA-binding</keyword>
<proteinExistence type="inferred from homology"/>
<evidence type="ECO:0000255" key="1">
    <source>
        <dbReference type="HAMAP-Rule" id="MF_01318"/>
    </source>
</evidence>
<evidence type="ECO:0000305" key="2"/>
<gene>
    <name evidence="1" type="primary">rplA</name>
    <name type="ordered locus">Mnod_1896</name>
</gene>
<accession>B8IS73</accession>